<comment type="function">
    <text evidence="4">Flavonol 3-O-glucoside (1-&gt;6) rhamnosyltransferase converting kaempferol 3-O-glucoside to kaempferol 3-O-rutinoside and utilizing 3-O-glucosylated/galactosylated flavonols and UDP-rhamnose as substrates. Prefers kaempferol to quercetin as an aglycon, and 3-O-galactosides to 3-O-glucosides as a glycosylation pattern.</text>
</comment>
<comment type="catalytic activity">
    <reaction evidence="6">
        <text>a flavonol 3-O-beta-D-glucoside + UDP-beta-L-rhamnose = a flavonol 3-O-[alpha-L-rhamnosyl-(1-&gt;6)-beta-D-glucoside] + UDP + H(+)</text>
        <dbReference type="Rhea" id="RHEA:22528"/>
        <dbReference type="ChEBI" id="CHEBI:15378"/>
        <dbReference type="ChEBI" id="CHEBI:16816"/>
        <dbReference type="ChEBI" id="CHEBI:17952"/>
        <dbReference type="ChEBI" id="CHEBI:58223"/>
        <dbReference type="ChEBI" id="CHEBI:83836"/>
        <dbReference type="EC" id="2.4.1.159"/>
    </reaction>
</comment>
<comment type="tissue specificity">
    <text evidence="4">Expressed in young leaves, flowers, pods and pod shells. Barely detected in seeds, roots and root nodules.</text>
</comment>
<comment type="miscellaneous">
    <text evidence="4">Flavonol glycosides (FGs) having rhamnose at the 6''-position of glucose or galactose that is bound to the 3-position of kaempferol are present in cv. Koganejiro, whereas FGs of cv. Kitakomachi are devoid of rhamnose.</text>
</comment>
<comment type="similarity">
    <text evidence="6">Belongs to the UDP-glycosyltransferase family.</text>
</comment>
<dbReference type="EC" id="2.4.1.159" evidence="6"/>
<dbReference type="EMBL" id="AB828193">
    <property type="protein sequence ID" value="BAN91401.1"/>
    <property type="molecule type" value="mRNA"/>
</dbReference>
<dbReference type="EMBL" id="CM000843">
    <property type="protein sequence ID" value="KRH34605.1"/>
    <property type="molecule type" value="Genomic_DNA"/>
</dbReference>
<dbReference type="RefSeq" id="NP_001275524.1">
    <property type="nucleotide sequence ID" value="NM_001288595.1"/>
</dbReference>
<dbReference type="SMR" id="I1LCI8"/>
<dbReference type="STRING" id="3847.I1LCI8"/>
<dbReference type="PaxDb" id="3847-GLYMA10G33790.1"/>
<dbReference type="EnsemblPlants" id="KRH34605">
    <property type="protein sequence ID" value="KRH34605"/>
    <property type="gene ID" value="GLYMA_10G194000"/>
</dbReference>
<dbReference type="GeneID" id="100819964"/>
<dbReference type="Gramene" id="KRH34605">
    <property type="protein sequence ID" value="KRH34605"/>
    <property type="gene ID" value="GLYMA_10G194000"/>
</dbReference>
<dbReference type="KEGG" id="gmx:100819964"/>
<dbReference type="eggNOG" id="KOG1192">
    <property type="taxonomic scope" value="Eukaryota"/>
</dbReference>
<dbReference type="HOGENOM" id="CLU_001724_2_3_1"/>
<dbReference type="InParanoid" id="I1LCI8"/>
<dbReference type="OMA" id="IKTCAEM"/>
<dbReference type="OrthoDB" id="5835829at2759"/>
<dbReference type="Proteomes" id="UP000008827">
    <property type="component" value="Chromosome 10"/>
</dbReference>
<dbReference type="GO" id="GO:0047230">
    <property type="term" value="F:flavonol-3-O-glucoside L-rhamnosyltransferase activity"/>
    <property type="evidence" value="ECO:0000314"/>
    <property type="project" value="UniProtKB"/>
</dbReference>
<dbReference type="GO" id="GO:0035251">
    <property type="term" value="F:UDP-glucosyltransferase activity"/>
    <property type="evidence" value="ECO:0000318"/>
    <property type="project" value="GO_Central"/>
</dbReference>
<dbReference type="CDD" id="cd03784">
    <property type="entry name" value="GT1_Gtf-like"/>
    <property type="match status" value="1"/>
</dbReference>
<dbReference type="FunFam" id="3.40.50.2000:FF:000037">
    <property type="entry name" value="Glycosyltransferase"/>
    <property type="match status" value="1"/>
</dbReference>
<dbReference type="FunFam" id="3.40.50.2000:FF:000087">
    <property type="entry name" value="Glycosyltransferase"/>
    <property type="match status" value="1"/>
</dbReference>
<dbReference type="Gene3D" id="3.40.50.2000">
    <property type="entry name" value="Glycogen Phosphorylase B"/>
    <property type="match status" value="2"/>
</dbReference>
<dbReference type="InterPro" id="IPR050481">
    <property type="entry name" value="UDP-glycosyltransf_plant"/>
</dbReference>
<dbReference type="InterPro" id="IPR002213">
    <property type="entry name" value="UDP_glucos_trans"/>
</dbReference>
<dbReference type="InterPro" id="IPR035595">
    <property type="entry name" value="UDP_glycos_trans_CS"/>
</dbReference>
<dbReference type="PANTHER" id="PTHR48049">
    <property type="entry name" value="GLYCOSYLTRANSFERASE"/>
    <property type="match status" value="1"/>
</dbReference>
<dbReference type="PANTHER" id="PTHR48049:SF84">
    <property type="entry name" value="UDP-GLYCOSYLTRANSFERASE 79A6"/>
    <property type="match status" value="1"/>
</dbReference>
<dbReference type="Pfam" id="PF00201">
    <property type="entry name" value="UDPGT"/>
    <property type="match status" value="1"/>
</dbReference>
<dbReference type="SUPFAM" id="SSF53756">
    <property type="entry name" value="UDP-Glycosyltransferase/glycogen phosphorylase"/>
    <property type="match status" value="1"/>
</dbReference>
<dbReference type="PROSITE" id="PS00375">
    <property type="entry name" value="UDPGT"/>
    <property type="match status" value="1"/>
</dbReference>
<protein>
    <recommendedName>
        <fullName evidence="5">UDP-glycosyltransferase 79A6</fullName>
        <ecNumber evidence="6">2.4.1.159</ecNumber>
    </recommendedName>
    <alternativeName>
        <fullName evidence="5">Flavonol 3-O-glucoside (1-&gt;6) rhamnosyltransferase</fullName>
        <shortName evidence="5">GmF3G6''Rt-a</shortName>
    </alternativeName>
</protein>
<evidence type="ECO:0000250" key="1">
    <source>
        <dbReference type="UniProtKB" id="A0A0A1HA03"/>
    </source>
</evidence>
<evidence type="ECO:0000250" key="2">
    <source>
        <dbReference type="UniProtKB" id="P51094"/>
    </source>
</evidence>
<evidence type="ECO:0000250" key="3">
    <source>
        <dbReference type="UniProtKB" id="Q9LNE6"/>
    </source>
</evidence>
<evidence type="ECO:0000269" key="4">
    <source>
    </source>
</evidence>
<evidence type="ECO:0000303" key="5">
    <source>
    </source>
</evidence>
<evidence type="ECO:0000305" key="6"/>
<evidence type="ECO:0000312" key="7">
    <source>
        <dbReference type="Proteomes" id="UP000008827"/>
    </source>
</evidence>
<reference key="1">
    <citation type="journal article" date="2014" name="Plant Mol. Biol.">
        <title>Linkage mapping, molecular cloning and functional analysis of soybean gene Fg2 encoding flavonol 3-O-glucoside (1-&gt;6) rhamnosyltransferase.</title>
        <authorList>
            <person name="Rojas Rodas F."/>
            <person name="Rodriguez T.O."/>
            <person name="Murai Y."/>
            <person name="Iwashina T."/>
            <person name="Sugawara S."/>
            <person name="Suzuki M."/>
            <person name="Nakabayashi R."/>
            <person name="Yonekura-Sakakibara K."/>
            <person name="Saito K."/>
            <person name="Kitajima J."/>
            <person name="Toda K."/>
            <person name="Takahashi R."/>
        </authorList>
    </citation>
    <scope>NUCLEOTIDE SEQUENCE [MRNA]</scope>
    <scope>FUNCTION</scope>
    <scope>CATALYTIC ACTIVITY</scope>
    <scope>TISSUE SPECIFICITY</scope>
    <source>
        <strain>cv. Koganejiro</strain>
    </source>
</reference>
<reference key="2">
    <citation type="journal article" date="2010" name="Nature">
        <title>Genome sequence of the palaeopolyploid soybean.</title>
        <authorList>
            <person name="Schmutz J."/>
            <person name="Cannon S.B."/>
            <person name="Schlueter J."/>
            <person name="Ma J."/>
            <person name="Mitros T."/>
            <person name="Nelson W."/>
            <person name="Hyten D.L."/>
            <person name="Song Q."/>
            <person name="Thelen J.J."/>
            <person name="Cheng J."/>
            <person name="Xu D."/>
            <person name="Hellsten U."/>
            <person name="May G.D."/>
            <person name="Yu Y."/>
            <person name="Sakurai T."/>
            <person name="Umezawa T."/>
            <person name="Bhattacharyya M.K."/>
            <person name="Sandhu D."/>
            <person name="Valliyodan B."/>
            <person name="Lindquist E."/>
            <person name="Peto M."/>
            <person name="Grant D."/>
            <person name="Shu S."/>
            <person name="Goodstein D."/>
            <person name="Barry K."/>
            <person name="Futrell-Griggs M."/>
            <person name="Abernathy B."/>
            <person name="Du J."/>
            <person name="Tian Z."/>
            <person name="Zhu L."/>
            <person name="Gill N."/>
            <person name="Joshi T."/>
            <person name="Libault M."/>
            <person name="Sethuraman A."/>
            <person name="Zhang X.-C."/>
            <person name="Shinozaki K."/>
            <person name="Nguyen H.T."/>
            <person name="Wing R.A."/>
            <person name="Cregan P."/>
            <person name="Specht J."/>
            <person name="Grimwood J."/>
            <person name="Rokhsar D."/>
            <person name="Stacey G."/>
            <person name="Shoemaker R.C."/>
            <person name="Jackson S.A."/>
        </authorList>
    </citation>
    <scope>NUCLEOTIDE SEQUENCE [LARGE SCALE GENOMIC DNA]</scope>
    <source>
        <strain>cv. Williams 82</strain>
    </source>
</reference>
<organism evidence="7">
    <name type="scientific">Glycine max</name>
    <name type="common">Soybean</name>
    <name type="synonym">Glycine hispida</name>
    <dbReference type="NCBI Taxonomy" id="3847"/>
    <lineage>
        <taxon>Eukaryota</taxon>
        <taxon>Viridiplantae</taxon>
        <taxon>Streptophyta</taxon>
        <taxon>Embryophyta</taxon>
        <taxon>Tracheophyta</taxon>
        <taxon>Spermatophyta</taxon>
        <taxon>Magnoliopsida</taxon>
        <taxon>eudicotyledons</taxon>
        <taxon>Gunneridae</taxon>
        <taxon>Pentapetalae</taxon>
        <taxon>rosids</taxon>
        <taxon>fabids</taxon>
        <taxon>Fabales</taxon>
        <taxon>Fabaceae</taxon>
        <taxon>Papilionoideae</taxon>
        <taxon>50 kb inversion clade</taxon>
        <taxon>NPAAA clade</taxon>
        <taxon>indigoferoid/millettioid clade</taxon>
        <taxon>Phaseoleae</taxon>
        <taxon>Glycine</taxon>
        <taxon>Glycine subgen. Soja</taxon>
    </lineage>
</organism>
<feature type="chain" id="PRO_0000436355" description="UDP-glycosyltransferase 79A6">
    <location>
        <begin position="1"/>
        <end position="464"/>
    </location>
</feature>
<feature type="active site" description="Proton acceptor" evidence="1">
    <location>
        <position position="24"/>
    </location>
</feature>
<feature type="active site" description="Charge relay" evidence="1">
    <location>
        <position position="115"/>
    </location>
</feature>
<feature type="binding site" evidence="2">
    <location>
        <position position="24"/>
    </location>
    <ligand>
        <name>an anthocyanidin</name>
        <dbReference type="ChEBI" id="CHEBI:143576"/>
    </ligand>
</feature>
<feature type="binding site" evidence="3">
    <location>
        <position position="278"/>
    </location>
    <ligand>
        <name>UDP-beta-L-rhamnose</name>
        <dbReference type="ChEBI" id="CHEBI:83836"/>
    </ligand>
</feature>
<feature type="binding site" evidence="3">
    <location>
        <position position="357"/>
    </location>
    <ligand>
        <name>UDP-beta-L-rhamnose</name>
        <dbReference type="ChEBI" id="CHEBI:83836"/>
    </ligand>
</feature>
<feature type="binding site" evidence="3">
    <location>
        <position position="362"/>
    </location>
    <ligand>
        <name>UDP-beta-L-rhamnose</name>
        <dbReference type="ChEBI" id="CHEBI:83836"/>
    </ligand>
</feature>
<feature type="binding site" evidence="3">
    <location>
        <position position="365"/>
    </location>
    <ligand>
        <name>UDP-beta-L-rhamnose</name>
        <dbReference type="ChEBI" id="CHEBI:83836"/>
    </ligand>
</feature>
<feature type="binding site" evidence="2">
    <location>
        <position position="380"/>
    </location>
    <ligand>
        <name>an anthocyanidin</name>
        <dbReference type="ChEBI" id="CHEBI:143576"/>
    </ligand>
</feature>
<accession>I1LCI8</accession>
<name>FG2KO_SOYBN</name>
<keyword id="KW-0328">Glycosyltransferase</keyword>
<keyword id="KW-1185">Reference proteome</keyword>
<keyword id="KW-0808">Transferase</keyword>
<sequence>MPSELAMNNDELHVVMFPFLAFGHISPFVQLSNKLFSHGVHVTFLSAASNIPRIRSTLNLNPAINVISLKFPNGITNTAELPPHLAGNLIHALDLTQDQVKSLLLELKPHYVFFDFAQHWLPKLASEVGIKSVHFSVYSAISDAYITVPSRFADVEGRNITFEDLKKPPPGYPQNSNISLKAFEAMDFMFLFTRFGEKNLTGYERVLQSLGECSFIVFKTCKEIEGPYLDYIETQFRKPVLLSGPLVPEPSTDVLEEKWSKWLDGFPAKSVILCSFGSETFLSDYQIKELASGLELTGLPFILVLNFPSNLSAKAELERALPKGYLERVKNRGVVHSGWFQQQLVLKHSSVGCYVCHGGFSSVIEAMVNECQLVLLPFKGDQFFNSKLIANDLKAGVEVNRSDEDGFFHKEDILEALKTVMLEDNKEQGKQIRENHMQWSKFLSNKEIQNKFITDLVAQLKSMA</sequence>
<gene>
    <name evidence="5" type="primary">FG2</name>
    <name evidence="5" type="synonym">UGT79A6</name>
    <name type="ordered locus">Glyma10g33790</name>
</gene>
<proteinExistence type="evidence at protein level"/>